<reference key="1">
    <citation type="journal article" date="2010" name="Environ. Microbiol.">
        <title>The genome of Syntrophomonas wolfei: new insights into syntrophic metabolism and biohydrogen production.</title>
        <authorList>
            <person name="Sieber J.R."/>
            <person name="Sims D.R."/>
            <person name="Han C."/>
            <person name="Kim E."/>
            <person name="Lykidis A."/>
            <person name="Lapidus A.L."/>
            <person name="McDonnald E."/>
            <person name="Rohlin L."/>
            <person name="Culley D.E."/>
            <person name="Gunsalus R."/>
            <person name="McInerney M.J."/>
        </authorList>
    </citation>
    <scope>NUCLEOTIDE SEQUENCE [LARGE SCALE GENOMIC DNA]</scope>
    <source>
        <strain>DSM 2245B / Goettingen</strain>
    </source>
</reference>
<accession>Q0AUI6</accession>
<sequence>MGQKVHPKGFRIGIIRDWDSNWYADRDYSELLHEDVKLRKFIKDRFYAAGISKVEIQRTGNRIRVTIHTAKPGIIIGRGGIEVERLKVNLAEMTKKNVNINIQEIRRPEMDAQIVAENVAQQLEKRISFRRAMKQTVGRTMRSGGIGIKIAISGRLGGAEIARTEWYAEGKVPLHTLRADIDYGFAEANTTYGKIGIKVWINRGEILPEAKQRPKEPKQKEMEEAGR</sequence>
<comment type="function">
    <text evidence="1">Binds the lower part of the 30S subunit head. Binds mRNA in the 70S ribosome, positioning it for translation.</text>
</comment>
<comment type="subunit">
    <text evidence="1">Part of the 30S ribosomal subunit. Forms a tight complex with proteins S10 and S14.</text>
</comment>
<comment type="similarity">
    <text evidence="1">Belongs to the universal ribosomal protein uS3 family.</text>
</comment>
<evidence type="ECO:0000255" key="1">
    <source>
        <dbReference type="HAMAP-Rule" id="MF_01309"/>
    </source>
</evidence>
<evidence type="ECO:0000305" key="2"/>
<proteinExistence type="inferred from homology"/>
<organism>
    <name type="scientific">Syntrophomonas wolfei subsp. wolfei (strain DSM 2245B / Goettingen)</name>
    <dbReference type="NCBI Taxonomy" id="335541"/>
    <lineage>
        <taxon>Bacteria</taxon>
        <taxon>Bacillati</taxon>
        <taxon>Bacillota</taxon>
        <taxon>Clostridia</taxon>
        <taxon>Eubacteriales</taxon>
        <taxon>Syntrophomonadaceae</taxon>
        <taxon>Syntrophomonas</taxon>
    </lineage>
</organism>
<name>RS3_SYNWW</name>
<dbReference type="EMBL" id="CP000448">
    <property type="protein sequence ID" value="ABI69618.1"/>
    <property type="molecule type" value="Genomic_DNA"/>
</dbReference>
<dbReference type="RefSeq" id="WP_011641702.1">
    <property type="nucleotide sequence ID" value="NC_008346.1"/>
</dbReference>
<dbReference type="SMR" id="Q0AUI6"/>
<dbReference type="STRING" id="335541.Swol_2327"/>
<dbReference type="KEGG" id="swo:Swol_2327"/>
<dbReference type="eggNOG" id="COG0092">
    <property type="taxonomic scope" value="Bacteria"/>
</dbReference>
<dbReference type="HOGENOM" id="CLU_058591_0_2_9"/>
<dbReference type="OrthoDB" id="9806396at2"/>
<dbReference type="Proteomes" id="UP000001968">
    <property type="component" value="Chromosome"/>
</dbReference>
<dbReference type="GO" id="GO:0022627">
    <property type="term" value="C:cytosolic small ribosomal subunit"/>
    <property type="evidence" value="ECO:0007669"/>
    <property type="project" value="TreeGrafter"/>
</dbReference>
<dbReference type="GO" id="GO:0003729">
    <property type="term" value="F:mRNA binding"/>
    <property type="evidence" value="ECO:0007669"/>
    <property type="project" value="UniProtKB-UniRule"/>
</dbReference>
<dbReference type="GO" id="GO:0019843">
    <property type="term" value="F:rRNA binding"/>
    <property type="evidence" value="ECO:0007669"/>
    <property type="project" value="UniProtKB-UniRule"/>
</dbReference>
<dbReference type="GO" id="GO:0003735">
    <property type="term" value="F:structural constituent of ribosome"/>
    <property type="evidence" value="ECO:0007669"/>
    <property type="project" value="InterPro"/>
</dbReference>
<dbReference type="GO" id="GO:0006412">
    <property type="term" value="P:translation"/>
    <property type="evidence" value="ECO:0007669"/>
    <property type="project" value="UniProtKB-UniRule"/>
</dbReference>
<dbReference type="CDD" id="cd02412">
    <property type="entry name" value="KH-II_30S_S3"/>
    <property type="match status" value="1"/>
</dbReference>
<dbReference type="FunFam" id="3.30.1140.32:FF:000002">
    <property type="entry name" value="30S ribosomal protein S3"/>
    <property type="match status" value="1"/>
</dbReference>
<dbReference type="FunFam" id="3.30.300.20:FF:000001">
    <property type="entry name" value="30S ribosomal protein S3"/>
    <property type="match status" value="1"/>
</dbReference>
<dbReference type="Gene3D" id="3.30.300.20">
    <property type="match status" value="1"/>
</dbReference>
<dbReference type="Gene3D" id="3.30.1140.32">
    <property type="entry name" value="Ribosomal protein S3, C-terminal domain"/>
    <property type="match status" value="1"/>
</dbReference>
<dbReference type="HAMAP" id="MF_01309_B">
    <property type="entry name" value="Ribosomal_uS3_B"/>
    <property type="match status" value="1"/>
</dbReference>
<dbReference type="InterPro" id="IPR004087">
    <property type="entry name" value="KH_dom"/>
</dbReference>
<dbReference type="InterPro" id="IPR015946">
    <property type="entry name" value="KH_dom-like_a/b"/>
</dbReference>
<dbReference type="InterPro" id="IPR004044">
    <property type="entry name" value="KH_dom_type_2"/>
</dbReference>
<dbReference type="InterPro" id="IPR009019">
    <property type="entry name" value="KH_sf_prok-type"/>
</dbReference>
<dbReference type="InterPro" id="IPR036419">
    <property type="entry name" value="Ribosomal_S3_C_sf"/>
</dbReference>
<dbReference type="InterPro" id="IPR005704">
    <property type="entry name" value="Ribosomal_uS3_bac-typ"/>
</dbReference>
<dbReference type="InterPro" id="IPR001351">
    <property type="entry name" value="Ribosomal_uS3_C"/>
</dbReference>
<dbReference type="InterPro" id="IPR018280">
    <property type="entry name" value="Ribosomal_uS3_CS"/>
</dbReference>
<dbReference type="NCBIfam" id="TIGR01009">
    <property type="entry name" value="rpsC_bact"/>
    <property type="match status" value="1"/>
</dbReference>
<dbReference type="PANTHER" id="PTHR11760">
    <property type="entry name" value="30S/40S RIBOSOMAL PROTEIN S3"/>
    <property type="match status" value="1"/>
</dbReference>
<dbReference type="PANTHER" id="PTHR11760:SF19">
    <property type="entry name" value="SMALL RIBOSOMAL SUBUNIT PROTEIN US3C"/>
    <property type="match status" value="1"/>
</dbReference>
<dbReference type="Pfam" id="PF07650">
    <property type="entry name" value="KH_2"/>
    <property type="match status" value="1"/>
</dbReference>
<dbReference type="Pfam" id="PF00189">
    <property type="entry name" value="Ribosomal_S3_C"/>
    <property type="match status" value="1"/>
</dbReference>
<dbReference type="SMART" id="SM00322">
    <property type="entry name" value="KH"/>
    <property type="match status" value="1"/>
</dbReference>
<dbReference type="SUPFAM" id="SSF54814">
    <property type="entry name" value="Prokaryotic type KH domain (KH-domain type II)"/>
    <property type="match status" value="1"/>
</dbReference>
<dbReference type="SUPFAM" id="SSF54821">
    <property type="entry name" value="Ribosomal protein S3 C-terminal domain"/>
    <property type="match status" value="1"/>
</dbReference>
<dbReference type="PROSITE" id="PS50823">
    <property type="entry name" value="KH_TYPE_2"/>
    <property type="match status" value="1"/>
</dbReference>
<dbReference type="PROSITE" id="PS00548">
    <property type="entry name" value="RIBOSOMAL_S3"/>
    <property type="match status" value="1"/>
</dbReference>
<feature type="chain" id="PRO_0000293910" description="Small ribosomal subunit protein uS3">
    <location>
        <begin position="1"/>
        <end position="227"/>
    </location>
</feature>
<feature type="domain" description="KH type-2" evidence="1">
    <location>
        <begin position="38"/>
        <end position="106"/>
    </location>
</feature>
<protein>
    <recommendedName>
        <fullName evidence="1">Small ribosomal subunit protein uS3</fullName>
    </recommendedName>
    <alternativeName>
        <fullName evidence="2">30S ribosomal protein S3</fullName>
    </alternativeName>
</protein>
<gene>
    <name evidence="1" type="primary">rpsC</name>
    <name type="ordered locus">Swol_2327</name>
</gene>
<keyword id="KW-1185">Reference proteome</keyword>
<keyword id="KW-0687">Ribonucleoprotein</keyword>
<keyword id="KW-0689">Ribosomal protein</keyword>
<keyword id="KW-0694">RNA-binding</keyword>
<keyword id="KW-0699">rRNA-binding</keyword>